<organism>
    <name type="scientific">Escherichia coli O6:H1 (strain CFT073 / ATCC 700928 / UPEC)</name>
    <dbReference type="NCBI Taxonomy" id="199310"/>
    <lineage>
        <taxon>Bacteria</taxon>
        <taxon>Pseudomonadati</taxon>
        <taxon>Pseudomonadota</taxon>
        <taxon>Gammaproteobacteria</taxon>
        <taxon>Enterobacterales</taxon>
        <taxon>Enterobacteriaceae</taxon>
        <taxon>Escherichia</taxon>
    </lineage>
</organism>
<proteinExistence type="evidence at protein level"/>
<keyword id="KW-0002">3D-structure</keyword>
<keyword id="KW-0378">Hydrolase</keyword>
<keyword id="KW-0448">Lipopolysaccharide biosynthesis</keyword>
<keyword id="KW-0460">Magnesium</keyword>
<keyword id="KW-0479">Metal-binding</keyword>
<keyword id="KW-1185">Reference proteome</keyword>
<sequence>MSKAGASLATCYGPVSADVMAKAENIRLLILDVDGVLSDGLIYMGNNGEELKAFNVRDGYGIRCALTSDIEVAIITGRKAKLVEDRCATLGITHLYQGQSNKLIAFSDLLEKLAIAPENVAYVGDDLIDWPVMEKVGLSVAVADAHPLLIPRADYVTRIAGGRGAVREVCDLLLLAQGKLDEAKGQSI</sequence>
<reference key="1">
    <citation type="journal article" date="2002" name="Proc. Natl. Acad. Sci. U.S.A.">
        <title>Extensive mosaic structure revealed by the complete genome sequence of uropathogenic Escherichia coli.</title>
        <authorList>
            <person name="Welch R.A."/>
            <person name="Burland V."/>
            <person name="Plunkett G. III"/>
            <person name="Redford P."/>
            <person name="Roesch P."/>
            <person name="Rasko D."/>
            <person name="Buckles E.L."/>
            <person name="Liou S.-R."/>
            <person name="Boutin A."/>
            <person name="Hackett J."/>
            <person name="Stroud D."/>
            <person name="Mayhew G.F."/>
            <person name="Rose D.J."/>
            <person name="Zhou S."/>
            <person name="Schwartz D.C."/>
            <person name="Perna N.T."/>
            <person name="Mobley H.L.T."/>
            <person name="Donnenberg M.S."/>
            <person name="Blattner F.R."/>
        </authorList>
    </citation>
    <scope>NUCLEOTIDE SEQUENCE [LARGE SCALE GENOMIC DNA]</scope>
    <source>
        <strain>CFT073 / ATCC 700928 / UPEC</strain>
    </source>
</reference>
<reference evidence="4 5 6 7 8 9" key="2">
    <citation type="journal article" date="2009" name="J. Biol. Chem.">
        <title>The tail of KdsC: conformational changes control the activity of a haloacid dehalogenase superfamily phosphatase.</title>
        <authorList>
            <person name="Biswas T."/>
            <person name="Yi L."/>
            <person name="Aggarwal P."/>
            <person name="Wu J."/>
            <person name="Rubin J.R."/>
            <person name="Stuckey J.A."/>
            <person name="Woodard R.W."/>
            <person name="Tsodikov O.V."/>
        </authorList>
    </citation>
    <scope>X-RAY CRYSTALLOGRAPHY (2.1 ANGSTROMS) IN COMPLEX WITH SUBSTRATE AND DIVALENT METALS</scope>
    <scope>FUNCTION AS A KDO 8-P PHOSPHATASE</scope>
    <scope>CATALYTIC ACTIVITY</scope>
    <scope>REACTION MECHANISM</scope>
    <scope>COFACTOR</scope>
    <scope>SUBUNIT</scope>
</reference>
<comment type="function">
    <text evidence="2">Catalyzes the hydrolysis of 3-deoxy-D-manno-octulosonate 8-phosphate (KDO 8-P) to 3-deoxy-D-manno-octulosonate (KDO) and inorganic phosphate.</text>
</comment>
<comment type="catalytic activity">
    <reaction evidence="2">
        <text>3-deoxy-alpha-D-manno-2-octulosonate-8-phosphate + H2O = 3-deoxy-alpha-D-manno-oct-2-ulosonate + phosphate</text>
        <dbReference type="Rhea" id="RHEA:11500"/>
        <dbReference type="ChEBI" id="CHEBI:15377"/>
        <dbReference type="ChEBI" id="CHEBI:43474"/>
        <dbReference type="ChEBI" id="CHEBI:85985"/>
        <dbReference type="ChEBI" id="CHEBI:85986"/>
        <dbReference type="EC" id="3.1.3.45"/>
    </reaction>
</comment>
<comment type="cofactor">
    <cofactor evidence="2">
        <name>Mg(2+)</name>
        <dbReference type="ChEBI" id="CHEBI:18420"/>
    </cofactor>
</comment>
<comment type="pathway">
    <text evidence="1">Carbohydrate biosynthesis; 3-deoxy-D-manno-octulosonate biosynthesis; 3-deoxy-D-manno-octulosonate from D-ribulose 5-phosphate: step 3/3.</text>
</comment>
<comment type="pathway">
    <text evidence="1">Bacterial outer membrane biogenesis; lipopolysaccharide biosynthesis.</text>
</comment>
<comment type="subunit">
    <text evidence="2">Homotetramer.</text>
</comment>
<comment type="similarity">
    <text evidence="3">Belongs to the KdsC family.</text>
</comment>
<dbReference type="EC" id="3.1.3.45" evidence="2"/>
<dbReference type="EMBL" id="AE014075">
    <property type="protein sequence ID" value="AAN82398.1"/>
    <property type="molecule type" value="Genomic_DNA"/>
</dbReference>
<dbReference type="RefSeq" id="WP_000030016.1">
    <property type="nucleotide sequence ID" value="NZ_CP051263.1"/>
</dbReference>
<dbReference type="PDB" id="2R8E">
    <property type="method" value="X-ray"/>
    <property type="resolution" value="1.40 A"/>
    <property type="chains" value="A/B/C/D/E/F/G/H=1-188"/>
</dbReference>
<dbReference type="PDB" id="2R8X">
    <property type="method" value="X-ray"/>
    <property type="resolution" value="2.60 A"/>
    <property type="chains" value="A/B/C/D/E/F/G/H/I/J/K/L/M/N/O/P=1-188"/>
</dbReference>
<dbReference type="PDB" id="2R8Y">
    <property type="method" value="X-ray"/>
    <property type="resolution" value="1.85 A"/>
    <property type="chains" value="A/B/C/D/E/F/G/H/I/J/K/L/M/N/O/P=1-188"/>
</dbReference>
<dbReference type="PDB" id="2R8Z">
    <property type="method" value="X-ray"/>
    <property type="resolution" value="2.10 A"/>
    <property type="chains" value="A/B/C/D/E/F/G/H/I/J/K/L/M/N/O/P=1-188"/>
</dbReference>
<dbReference type="PDB" id="3HYC">
    <property type="method" value="X-ray"/>
    <property type="resolution" value="3.06 A"/>
    <property type="chains" value="A/B/C/D/E/F/G/H=1-188"/>
</dbReference>
<dbReference type="PDB" id="3I6B">
    <property type="method" value="X-ray"/>
    <property type="resolution" value="2.49 A"/>
    <property type="chains" value="A/B/C/D=1-180"/>
</dbReference>
<dbReference type="PDBsum" id="2R8E"/>
<dbReference type="PDBsum" id="2R8X"/>
<dbReference type="PDBsum" id="2R8Y"/>
<dbReference type="PDBsum" id="2R8Z"/>
<dbReference type="PDBsum" id="3HYC"/>
<dbReference type="PDBsum" id="3I6B"/>
<dbReference type="SMR" id="P67653"/>
<dbReference type="STRING" id="199310.c3958"/>
<dbReference type="KEGG" id="ecc:c3958"/>
<dbReference type="eggNOG" id="COG1778">
    <property type="taxonomic scope" value="Bacteria"/>
</dbReference>
<dbReference type="HOGENOM" id="CLU_106694_0_1_6"/>
<dbReference type="BioCyc" id="ECOL199310:C3958-MONOMER"/>
<dbReference type="UniPathway" id="UPA00030"/>
<dbReference type="UniPathway" id="UPA00357">
    <property type="reaction ID" value="UER00475"/>
</dbReference>
<dbReference type="EvolutionaryTrace" id="P67653"/>
<dbReference type="Proteomes" id="UP000001410">
    <property type="component" value="Chromosome"/>
</dbReference>
<dbReference type="GO" id="GO:0019143">
    <property type="term" value="F:3-deoxy-manno-octulosonate-8-phosphatase activity"/>
    <property type="evidence" value="ECO:0000314"/>
    <property type="project" value="UniProtKB"/>
</dbReference>
<dbReference type="GO" id="GO:0046872">
    <property type="term" value="F:metal ion binding"/>
    <property type="evidence" value="ECO:0007669"/>
    <property type="project" value="UniProtKB-KW"/>
</dbReference>
<dbReference type="GO" id="GO:0008781">
    <property type="term" value="F:N-acylneuraminate cytidylyltransferase activity"/>
    <property type="evidence" value="ECO:0007669"/>
    <property type="project" value="TreeGrafter"/>
</dbReference>
<dbReference type="GO" id="GO:0009103">
    <property type="term" value="P:lipopolysaccharide biosynthetic process"/>
    <property type="evidence" value="ECO:0000314"/>
    <property type="project" value="UniProtKB"/>
</dbReference>
<dbReference type="CDD" id="cd01630">
    <property type="entry name" value="HAD_KDO-like"/>
    <property type="match status" value="1"/>
</dbReference>
<dbReference type="FunFam" id="3.40.50.1000:FF:000029">
    <property type="entry name" value="3-deoxy-D-manno-octulosonate 8-phosphate phosphatase KdsC"/>
    <property type="match status" value="1"/>
</dbReference>
<dbReference type="Gene3D" id="3.40.50.1000">
    <property type="entry name" value="HAD superfamily/HAD-like"/>
    <property type="match status" value="1"/>
</dbReference>
<dbReference type="InterPro" id="IPR050793">
    <property type="entry name" value="CMP-NeuNAc_synthase"/>
</dbReference>
<dbReference type="InterPro" id="IPR036412">
    <property type="entry name" value="HAD-like_sf"/>
</dbReference>
<dbReference type="InterPro" id="IPR023214">
    <property type="entry name" value="HAD_sf"/>
</dbReference>
<dbReference type="InterPro" id="IPR010023">
    <property type="entry name" value="KdsC_fam"/>
</dbReference>
<dbReference type="NCBIfam" id="TIGR01670">
    <property type="entry name" value="KdsC-phosphatas"/>
    <property type="match status" value="1"/>
</dbReference>
<dbReference type="NCBIfam" id="NF007019">
    <property type="entry name" value="PRK09484.1"/>
    <property type="match status" value="1"/>
</dbReference>
<dbReference type="PANTHER" id="PTHR21485">
    <property type="entry name" value="HAD SUPERFAMILY MEMBERS CMAS AND KDSC"/>
    <property type="match status" value="1"/>
</dbReference>
<dbReference type="PANTHER" id="PTHR21485:SF6">
    <property type="entry name" value="N-ACYLNEURAMINATE CYTIDYLYLTRANSFERASE-RELATED"/>
    <property type="match status" value="1"/>
</dbReference>
<dbReference type="Pfam" id="PF08282">
    <property type="entry name" value="Hydrolase_3"/>
    <property type="match status" value="1"/>
</dbReference>
<dbReference type="PIRSF" id="PIRSF006118">
    <property type="entry name" value="KDO8-P_Ptase"/>
    <property type="match status" value="1"/>
</dbReference>
<dbReference type="SFLD" id="SFLDG01138">
    <property type="entry name" value="C1.6.2:_Deoxy-d-mannose-octulo"/>
    <property type="match status" value="1"/>
</dbReference>
<dbReference type="SFLD" id="SFLDG01136">
    <property type="entry name" value="C1.6:_Phosphoserine_Phosphatas"/>
    <property type="match status" value="1"/>
</dbReference>
<dbReference type="SUPFAM" id="SSF56784">
    <property type="entry name" value="HAD-like"/>
    <property type="match status" value="1"/>
</dbReference>
<gene>
    <name type="primary">kdsC</name>
    <name type="ordered locus">c3958</name>
</gene>
<name>KDSC_ECOL6</name>
<feature type="chain" id="PRO_0000201698" description="3-deoxy-D-manno-octulosonate 8-phosphate phosphatase KdsC">
    <location>
        <begin position="1"/>
        <end position="188"/>
    </location>
</feature>
<feature type="binding site" evidence="2">
    <location>
        <position position="32"/>
    </location>
    <ligand>
        <name>Mg(2+)</name>
        <dbReference type="ChEBI" id="CHEBI:18420"/>
    </ligand>
</feature>
<feature type="binding site" evidence="2">
    <location>
        <position position="34"/>
    </location>
    <ligand>
        <name>Mg(2+)</name>
        <dbReference type="ChEBI" id="CHEBI:18420"/>
    </ligand>
</feature>
<feature type="binding site" evidence="2">
    <location>
        <position position="34"/>
    </location>
    <ligand>
        <name>substrate</name>
    </ligand>
</feature>
<feature type="binding site" evidence="2">
    <location>
        <begin position="55"/>
        <end position="59"/>
    </location>
    <ligand>
        <name>substrate</name>
    </ligand>
</feature>
<feature type="binding site" evidence="2">
    <location>
        <position position="63"/>
    </location>
    <ligand>
        <name>substrate</name>
    </ligand>
</feature>
<feature type="binding site" evidence="2">
    <location>
        <position position="78"/>
    </location>
    <ligand>
        <name>substrate</name>
    </ligand>
</feature>
<feature type="binding site" evidence="2">
    <location>
        <position position="86"/>
    </location>
    <ligand>
        <name>substrate</name>
    </ligand>
</feature>
<feature type="binding site" evidence="2">
    <location>
        <position position="102"/>
    </location>
    <ligand>
        <name>substrate</name>
    </ligand>
</feature>
<feature type="binding site" evidence="2">
    <location>
        <position position="125"/>
    </location>
    <ligand>
        <name>Mg(2+)</name>
        <dbReference type="ChEBI" id="CHEBI:18420"/>
    </ligand>
</feature>
<feature type="helix" evidence="10">
    <location>
        <begin position="17"/>
        <end position="24"/>
    </location>
</feature>
<feature type="strand" evidence="10">
    <location>
        <begin position="27"/>
        <end position="31"/>
    </location>
</feature>
<feature type="helix" evidence="10">
    <location>
        <begin position="33"/>
        <end position="37"/>
    </location>
</feature>
<feature type="strand" evidence="10">
    <location>
        <begin position="40"/>
        <end position="45"/>
    </location>
</feature>
<feature type="strand" evidence="10">
    <location>
        <begin position="50"/>
        <end position="55"/>
    </location>
</feature>
<feature type="helix" evidence="10">
    <location>
        <begin position="56"/>
        <end position="66"/>
    </location>
</feature>
<feature type="turn" evidence="10">
    <location>
        <begin position="67"/>
        <end position="69"/>
    </location>
</feature>
<feature type="strand" evidence="10">
    <location>
        <begin position="71"/>
        <end position="75"/>
    </location>
</feature>
<feature type="helix" evidence="10">
    <location>
        <begin position="81"/>
        <end position="90"/>
    </location>
</feature>
<feature type="strand" evidence="10">
    <location>
        <begin position="94"/>
        <end position="96"/>
    </location>
</feature>
<feature type="helix" evidence="10">
    <location>
        <begin position="103"/>
        <end position="113"/>
    </location>
</feature>
<feature type="helix" evidence="10">
    <location>
        <begin position="117"/>
        <end position="119"/>
    </location>
</feature>
<feature type="strand" evidence="10">
    <location>
        <begin position="120"/>
        <end position="126"/>
    </location>
</feature>
<feature type="helix" evidence="10">
    <location>
        <begin position="127"/>
        <end position="129"/>
    </location>
</feature>
<feature type="helix" evidence="10">
    <location>
        <begin position="130"/>
        <end position="133"/>
    </location>
</feature>
<feature type="strand" evidence="10">
    <location>
        <begin position="136"/>
        <end position="141"/>
    </location>
</feature>
<feature type="turn" evidence="10">
    <location>
        <begin position="147"/>
        <end position="149"/>
    </location>
</feature>
<feature type="helix" evidence="10">
    <location>
        <begin position="150"/>
        <end position="152"/>
    </location>
</feature>
<feature type="strand" evidence="10">
    <location>
        <begin position="153"/>
        <end position="156"/>
    </location>
</feature>
<feature type="turn" evidence="10">
    <location>
        <begin position="161"/>
        <end position="164"/>
    </location>
</feature>
<feature type="helix" evidence="10">
    <location>
        <begin position="165"/>
        <end position="176"/>
    </location>
</feature>
<feature type="turn" evidence="11">
    <location>
        <begin position="180"/>
        <end position="182"/>
    </location>
</feature>
<protein>
    <recommendedName>
        <fullName>3-deoxy-D-manno-octulosonate 8-phosphate phosphatase KdsC</fullName>
        <ecNumber evidence="2">3.1.3.45</ecNumber>
    </recommendedName>
    <alternativeName>
        <fullName>KDO 8-P phosphatase</fullName>
    </alternativeName>
</protein>
<evidence type="ECO:0000250" key="1">
    <source>
        <dbReference type="UniProtKB" id="A0A140N5J7"/>
    </source>
</evidence>
<evidence type="ECO:0000269" key="2">
    <source>
    </source>
</evidence>
<evidence type="ECO:0000305" key="3"/>
<evidence type="ECO:0007744" key="4">
    <source>
        <dbReference type="PDB" id="2R8E"/>
    </source>
</evidence>
<evidence type="ECO:0007744" key="5">
    <source>
        <dbReference type="PDB" id="2R8X"/>
    </source>
</evidence>
<evidence type="ECO:0007744" key="6">
    <source>
        <dbReference type="PDB" id="2R8Y"/>
    </source>
</evidence>
<evidence type="ECO:0007744" key="7">
    <source>
        <dbReference type="PDB" id="2R8Z"/>
    </source>
</evidence>
<evidence type="ECO:0007744" key="8">
    <source>
        <dbReference type="PDB" id="3HYC"/>
    </source>
</evidence>
<evidence type="ECO:0007744" key="9">
    <source>
        <dbReference type="PDB" id="3I6B"/>
    </source>
</evidence>
<evidence type="ECO:0007829" key="10">
    <source>
        <dbReference type="PDB" id="2R8E"/>
    </source>
</evidence>
<evidence type="ECO:0007829" key="11">
    <source>
        <dbReference type="PDB" id="2R8Y"/>
    </source>
</evidence>
<accession>P67653</accession>
<accession>Q83JF3</accession>
<accession>Q8FD72</accession>